<accession>Q8VRG9</accession>
<keyword id="KW-0677">Repeat</keyword>
<comment type="similarity">
    <text evidence="2">Belongs to the transcriptional antiterminator BglG family. GlcT subfamily.</text>
</comment>
<sequence length="282" mass="32873">MSKYVITKTLNNNVIICTKNHQEVVLIGKGIGFNKKVGMTVQENASIEKIYKLEQQEQQEHYKTLLELGEDHVVQAVIESVNIINESGLITDDKNLVVALTDHIIYAYKRLKQHQMITNPFVIETKHLYSNAYNVARKVIDKLNKTLDVHFPEDEIGFIALHIASNSEKLSIHDISVINKLINKSITIIETDLQHSIDKQTIQYQRFIRHIQFLIYRLTKGEYLEAQENFISMIKTMYPRSFNTAYKILKMIQREFSVYVYEAEIVYLTLHINHFEVQISSE</sequence>
<proteinExistence type="inferred from homology"/>
<reference key="1">
    <citation type="submission" date="2001-11" db="EMBL/GenBank/DDBJ databases">
        <title>Transcriptional regulation of glcA expression by antiterminator GlcT.</title>
        <authorList>
            <person name="Kiel K."/>
            <person name="Knobloch J.K.M."/>
            <person name="Mack D."/>
        </authorList>
    </citation>
    <scope>NUCLEOTIDE SEQUENCE [GENOMIC DNA]</scope>
    <source>
        <strain>Clinical isolate 1457</strain>
    </source>
</reference>
<gene>
    <name type="primary">glcT</name>
</gene>
<organism>
    <name type="scientific">Staphylococcus epidermidis</name>
    <dbReference type="NCBI Taxonomy" id="1282"/>
    <lineage>
        <taxon>Bacteria</taxon>
        <taxon>Bacillati</taxon>
        <taxon>Bacillota</taxon>
        <taxon>Bacilli</taxon>
        <taxon>Bacillales</taxon>
        <taxon>Staphylococcaceae</taxon>
        <taxon>Staphylococcus</taxon>
    </lineage>
</organism>
<dbReference type="EMBL" id="AF443794">
    <property type="protein sequence ID" value="AAL38017.1"/>
    <property type="molecule type" value="Genomic_DNA"/>
</dbReference>
<dbReference type="RefSeq" id="WP_002456203.1">
    <property type="nucleotide sequence ID" value="NZ_WLVA01000001.1"/>
</dbReference>
<dbReference type="SMR" id="Q8VRG9"/>
<dbReference type="OMA" id="CYNLSWK"/>
<dbReference type="OrthoDB" id="9813552at2"/>
<dbReference type="GO" id="GO:0003723">
    <property type="term" value="F:RNA binding"/>
    <property type="evidence" value="ECO:0007669"/>
    <property type="project" value="InterPro"/>
</dbReference>
<dbReference type="GO" id="GO:0045893">
    <property type="term" value="P:positive regulation of DNA-templated transcription"/>
    <property type="evidence" value="ECO:0007669"/>
    <property type="project" value="InterPro"/>
</dbReference>
<dbReference type="Gene3D" id="1.20.58.1950">
    <property type="match status" value="1"/>
</dbReference>
<dbReference type="Gene3D" id="1.20.890.100">
    <property type="match status" value="1"/>
</dbReference>
<dbReference type="Gene3D" id="2.30.24.10">
    <property type="entry name" value="CAT RNA-binding domain"/>
    <property type="match status" value="1"/>
</dbReference>
<dbReference type="Gene3D" id="1.10.1790.10">
    <property type="entry name" value="PRD domain"/>
    <property type="match status" value="1"/>
</dbReference>
<dbReference type="InterPro" id="IPR050661">
    <property type="entry name" value="BglG_antiterminators"/>
</dbReference>
<dbReference type="InterPro" id="IPR004341">
    <property type="entry name" value="CAT_RNA-bd_dom"/>
</dbReference>
<dbReference type="InterPro" id="IPR036650">
    <property type="entry name" value="CAT_RNA-bd_dom_sf"/>
</dbReference>
<dbReference type="InterPro" id="IPR011608">
    <property type="entry name" value="PRD"/>
</dbReference>
<dbReference type="InterPro" id="IPR036634">
    <property type="entry name" value="PRD_sf"/>
</dbReference>
<dbReference type="InterPro" id="IPR001550">
    <property type="entry name" value="Transcrpt_antitermin_CS"/>
</dbReference>
<dbReference type="NCBIfam" id="NF047357">
    <property type="entry name" value="antiterm_GlcT"/>
    <property type="match status" value="1"/>
</dbReference>
<dbReference type="PANTHER" id="PTHR30185">
    <property type="entry name" value="CRYPTIC BETA-GLUCOSIDE BGL OPERON ANTITERMINATOR"/>
    <property type="match status" value="1"/>
</dbReference>
<dbReference type="PANTHER" id="PTHR30185:SF16">
    <property type="entry name" value="PROTEIN GLCT"/>
    <property type="match status" value="1"/>
</dbReference>
<dbReference type="Pfam" id="PF03123">
    <property type="entry name" value="CAT_RBD"/>
    <property type="match status" value="1"/>
</dbReference>
<dbReference type="Pfam" id="PF00874">
    <property type="entry name" value="PRD"/>
    <property type="match status" value="2"/>
</dbReference>
<dbReference type="SMART" id="SM01061">
    <property type="entry name" value="CAT_RBD"/>
    <property type="match status" value="1"/>
</dbReference>
<dbReference type="SUPFAM" id="SSF63520">
    <property type="entry name" value="PTS-regulatory domain, PRD"/>
    <property type="match status" value="2"/>
</dbReference>
<dbReference type="SUPFAM" id="SSF50151">
    <property type="entry name" value="SacY-like RNA-binding domain"/>
    <property type="match status" value="1"/>
</dbReference>
<dbReference type="PROSITE" id="PS00654">
    <property type="entry name" value="PRD_1"/>
    <property type="match status" value="1"/>
</dbReference>
<dbReference type="PROSITE" id="PS51372">
    <property type="entry name" value="PRD_2"/>
    <property type="match status" value="2"/>
</dbReference>
<evidence type="ECO:0000255" key="1">
    <source>
        <dbReference type="PROSITE-ProRule" id="PRU00704"/>
    </source>
</evidence>
<evidence type="ECO:0000305" key="2"/>
<protein>
    <recommendedName>
        <fullName>Protein GlcT</fullName>
    </recommendedName>
</protein>
<feature type="chain" id="PRO_0000352614" description="Protein GlcT">
    <location>
        <begin position="1"/>
        <end position="282"/>
    </location>
</feature>
<feature type="domain" description="PRD 1" evidence="1">
    <location>
        <begin position="68"/>
        <end position="173"/>
    </location>
</feature>
<feature type="domain" description="PRD 2" evidence="1">
    <location>
        <begin position="174"/>
        <end position="282"/>
    </location>
</feature>
<name>GLCT_STAEP</name>